<keyword id="KW-1185">Reference proteome</keyword>
<keyword id="KW-0687">Ribonucleoprotein</keyword>
<keyword id="KW-0689">Ribosomal protein</keyword>
<name>RL7_JANSC</name>
<reference key="1">
    <citation type="submission" date="2006-02" db="EMBL/GenBank/DDBJ databases">
        <title>Complete sequence of chromosome of Jannaschia sp. CCS1.</title>
        <authorList>
            <consortium name="US DOE Joint Genome Institute"/>
            <person name="Copeland A."/>
            <person name="Lucas S."/>
            <person name="Lapidus A."/>
            <person name="Barry K."/>
            <person name="Detter J.C."/>
            <person name="Glavina del Rio T."/>
            <person name="Hammon N."/>
            <person name="Israni S."/>
            <person name="Pitluck S."/>
            <person name="Brettin T."/>
            <person name="Bruce D."/>
            <person name="Han C."/>
            <person name="Tapia R."/>
            <person name="Gilna P."/>
            <person name="Chertkov O."/>
            <person name="Saunders E."/>
            <person name="Schmutz J."/>
            <person name="Larimer F."/>
            <person name="Land M."/>
            <person name="Kyrpides N."/>
            <person name="Lykidis A."/>
            <person name="Moran M.A."/>
            <person name="Belas R."/>
            <person name="Ye W."/>
            <person name="Buchan A."/>
            <person name="Gonzalez J.M."/>
            <person name="Schell M.A."/>
            <person name="Richardson P."/>
        </authorList>
    </citation>
    <scope>NUCLEOTIDE SEQUENCE [LARGE SCALE GENOMIC DNA]</scope>
    <source>
        <strain>CCS1</strain>
    </source>
</reference>
<organism>
    <name type="scientific">Jannaschia sp. (strain CCS1)</name>
    <dbReference type="NCBI Taxonomy" id="290400"/>
    <lineage>
        <taxon>Bacteria</taxon>
        <taxon>Pseudomonadati</taxon>
        <taxon>Pseudomonadota</taxon>
        <taxon>Alphaproteobacteria</taxon>
        <taxon>Rhodobacterales</taxon>
        <taxon>Roseobacteraceae</taxon>
        <taxon>Jannaschia</taxon>
    </lineage>
</organism>
<accession>Q28UX8</accession>
<comment type="function">
    <text evidence="1">Forms part of the ribosomal stalk which helps the ribosome interact with GTP-bound translation factors. Is thus essential for accurate translation.</text>
</comment>
<comment type="subunit">
    <text evidence="1">Homodimer. Part of the ribosomal stalk of the 50S ribosomal subunit. Forms a multimeric L10(L12)X complex, where L10 forms an elongated spine to which 2 to 4 L12 dimers bind in a sequential fashion. Binds GTP-bound translation factors.</text>
</comment>
<comment type="similarity">
    <text evidence="1">Belongs to the bacterial ribosomal protein bL12 family.</text>
</comment>
<evidence type="ECO:0000255" key="1">
    <source>
        <dbReference type="HAMAP-Rule" id="MF_00368"/>
    </source>
</evidence>
<evidence type="ECO:0000305" key="2"/>
<protein>
    <recommendedName>
        <fullName evidence="1">Large ribosomal subunit protein bL12</fullName>
    </recommendedName>
    <alternativeName>
        <fullName evidence="2">50S ribosomal protein L7/L12</fullName>
    </alternativeName>
</protein>
<sequence>MADLKKLAEEIVGLTLLEAQELKTILKDEYGIEPAAGGAVMMAGPADGAGGAAEEQTEFDVVLKNAGASKINVIKEVRGITGLGLKEAKDLVEAGGKIKEGVDKAEAEEIKGKLEAAGAEVELA</sequence>
<feature type="chain" id="PRO_0000243435" description="Large ribosomal subunit protein bL12">
    <location>
        <begin position="1"/>
        <end position="124"/>
    </location>
</feature>
<gene>
    <name evidence="1" type="primary">rplL</name>
    <name type="ordered locus">Jann_0567</name>
</gene>
<dbReference type="EMBL" id="CP000264">
    <property type="protein sequence ID" value="ABD53484.1"/>
    <property type="molecule type" value="Genomic_DNA"/>
</dbReference>
<dbReference type="RefSeq" id="WP_011453693.1">
    <property type="nucleotide sequence ID" value="NC_007802.1"/>
</dbReference>
<dbReference type="SMR" id="Q28UX8"/>
<dbReference type="STRING" id="290400.Jann_0567"/>
<dbReference type="KEGG" id="jan:Jann_0567"/>
<dbReference type="eggNOG" id="COG0222">
    <property type="taxonomic scope" value="Bacteria"/>
</dbReference>
<dbReference type="HOGENOM" id="CLU_086499_3_0_5"/>
<dbReference type="OrthoDB" id="9811748at2"/>
<dbReference type="Proteomes" id="UP000008326">
    <property type="component" value="Chromosome"/>
</dbReference>
<dbReference type="GO" id="GO:0022625">
    <property type="term" value="C:cytosolic large ribosomal subunit"/>
    <property type="evidence" value="ECO:0007669"/>
    <property type="project" value="TreeGrafter"/>
</dbReference>
<dbReference type="GO" id="GO:0003729">
    <property type="term" value="F:mRNA binding"/>
    <property type="evidence" value="ECO:0007669"/>
    <property type="project" value="TreeGrafter"/>
</dbReference>
<dbReference type="GO" id="GO:0003735">
    <property type="term" value="F:structural constituent of ribosome"/>
    <property type="evidence" value="ECO:0007669"/>
    <property type="project" value="InterPro"/>
</dbReference>
<dbReference type="GO" id="GO:0006412">
    <property type="term" value="P:translation"/>
    <property type="evidence" value="ECO:0007669"/>
    <property type="project" value="UniProtKB-UniRule"/>
</dbReference>
<dbReference type="CDD" id="cd00387">
    <property type="entry name" value="Ribosomal_L7_L12"/>
    <property type="match status" value="1"/>
</dbReference>
<dbReference type="FunFam" id="3.30.1390.10:FF:000001">
    <property type="entry name" value="50S ribosomal protein L7/L12"/>
    <property type="match status" value="1"/>
</dbReference>
<dbReference type="Gene3D" id="3.30.1390.10">
    <property type="match status" value="1"/>
</dbReference>
<dbReference type="Gene3D" id="1.20.5.710">
    <property type="entry name" value="Single helix bin"/>
    <property type="match status" value="1"/>
</dbReference>
<dbReference type="HAMAP" id="MF_00368">
    <property type="entry name" value="Ribosomal_bL12"/>
    <property type="match status" value="1"/>
</dbReference>
<dbReference type="InterPro" id="IPR000206">
    <property type="entry name" value="Ribosomal_bL12"/>
</dbReference>
<dbReference type="InterPro" id="IPR013823">
    <property type="entry name" value="Ribosomal_bL12_C"/>
</dbReference>
<dbReference type="InterPro" id="IPR014719">
    <property type="entry name" value="Ribosomal_bL12_C/ClpS-like"/>
</dbReference>
<dbReference type="InterPro" id="IPR008932">
    <property type="entry name" value="Ribosomal_bL12_oligo"/>
</dbReference>
<dbReference type="InterPro" id="IPR036235">
    <property type="entry name" value="Ribosomal_bL12_oligo_N_sf"/>
</dbReference>
<dbReference type="NCBIfam" id="TIGR00855">
    <property type="entry name" value="L12"/>
    <property type="match status" value="1"/>
</dbReference>
<dbReference type="PANTHER" id="PTHR45987">
    <property type="entry name" value="39S RIBOSOMAL PROTEIN L12"/>
    <property type="match status" value="1"/>
</dbReference>
<dbReference type="PANTHER" id="PTHR45987:SF4">
    <property type="entry name" value="LARGE RIBOSOMAL SUBUNIT PROTEIN BL12M"/>
    <property type="match status" value="1"/>
</dbReference>
<dbReference type="Pfam" id="PF00542">
    <property type="entry name" value="Ribosomal_L12"/>
    <property type="match status" value="1"/>
</dbReference>
<dbReference type="Pfam" id="PF16320">
    <property type="entry name" value="Ribosomal_L12_N"/>
    <property type="match status" value="1"/>
</dbReference>
<dbReference type="SUPFAM" id="SSF54736">
    <property type="entry name" value="ClpS-like"/>
    <property type="match status" value="1"/>
</dbReference>
<dbReference type="SUPFAM" id="SSF48300">
    <property type="entry name" value="Ribosomal protein L7/12, oligomerisation (N-terminal) domain"/>
    <property type="match status" value="1"/>
</dbReference>
<proteinExistence type="inferred from homology"/>